<dbReference type="EC" id="1.11.1.21" evidence="1"/>
<dbReference type="EMBL" id="CT971583">
    <property type="protein sequence ID" value="CAK23218.1"/>
    <property type="molecule type" value="Genomic_DNA"/>
</dbReference>
<dbReference type="SMR" id="A5GJV3"/>
<dbReference type="STRING" id="32051.SynWH7803_0792"/>
<dbReference type="PeroxiBase" id="6246">
    <property type="entry name" value="SspCP01_WH7803"/>
</dbReference>
<dbReference type="KEGG" id="syx:SynWH7803_0792"/>
<dbReference type="eggNOG" id="COG0376">
    <property type="taxonomic scope" value="Bacteria"/>
</dbReference>
<dbReference type="HOGENOM" id="CLU_025424_2_0_3"/>
<dbReference type="OrthoDB" id="9759743at2"/>
<dbReference type="Proteomes" id="UP000001566">
    <property type="component" value="Chromosome"/>
</dbReference>
<dbReference type="GO" id="GO:0005829">
    <property type="term" value="C:cytosol"/>
    <property type="evidence" value="ECO:0007669"/>
    <property type="project" value="TreeGrafter"/>
</dbReference>
<dbReference type="GO" id="GO:0004096">
    <property type="term" value="F:catalase activity"/>
    <property type="evidence" value="ECO:0007669"/>
    <property type="project" value="UniProtKB-UniRule"/>
</dbReference>
<dbReference type="GO" id="GO:0020037">
    <property type="term" value="F:heme binding"/>
    <property type="evidence" value="ECO:0007669"/>
    <property type="project" value="InterPro"/>
</dbReference>
<dbReference type="GO" id="GO:0046872">
    <property type="term" value="F:metal ion binding"/>
    <property type="evidence" value="ECO:0007669"/>
    <property type="project" value="UniProtKB-KW"/>
</dbReference>
<dbReference type="GO" id="GO:0070301">
    <property type="term" value="P:cellular response to hydrogen peroxide"/>
    <property type="evidence" value="ECO:0007669"/>
    <property type="project" value="TreeGrafter"/>
</dbReference>
<dbReference type="GO" id="GO:0042744">
    <property type="term" value="P:hydrogen peroxide catabolic process"/>
    <property type="evidence" value="ECO:0007669"/>
    <property type="project" value="UniProtKB-KW"/>
</dbReference>
<dbReference type="CDD" id="cd00649">
    <property type="entry name" value="catalase_peroxidase_1"/>
    <property type="match status" value="1"/>
</dbReference>
<dbReference type="CDD" id="cd08200">
    <property type="entry name" value="catalase_peroxidase_2"/>
    <property type="match status" value="1"/>
</dbReference>
<dbReference type="FunFam" id="1.10.420.10:FF:000004">
    <property type="entry name" value="Catalase-peroxidase"/>
    <property type="match status" value="1"/>
</dbReference>
<dbReference type="FunFam" id="1.10.520.10:FF:000002">
    <property type="entry name" value="Catalase-peroxidase"/>
    <property type="match status" value="1"/>
</dbReference>
<dbReference type="Gene3D" id="1.10.520.10">
    <property type="match status" value="2"/>
</dbReference>
<dbReference type="Gene3D" id="1.10.420.10">
    <property type="entry name" value="Peroxidase, domain 2"/>
    <property type="match status" value="2"/>
</dbReference>
<dbReference type="HAMAP" id="MF_01961">
    <property type="entry name" value="Catal_peroxid"/>
    <property type="match status" value="1"/>
</dbReference>
<dbReference type="InterPro" id="IPR000763">
    <property type="entry name" value="Catalase_peroxidase"/>
</dbReference>
<dbReference type="InterPro" id="IPR002016">
    <property type="entry name" value="Haem_peroxidase"/>
</dbReference>
<dbReference type="InterPro" id="IPR010255">
    <property type="entry name" value="Haem_peroxidase_sf"/>
</dbReference>
<dbReference type="InterPro" id="IPR019794">
    <property type="entry name" value="Peroxidases_AS"/>
</dbReference>
<dbReference type="InterPro" id="IPR019793">
    <property type="entry name" value="Peroxidases_heam-ligand_BS"/>
</dbReference>
<dbReference type="NCBIfam" id="TIGR00198">
    <property type="entry name" value="cat_per_HPI"/>
    <property type="match status" value="1"/>
</dbReference>
<dbReference type="NCBIfam" id="NF011635">
    <property type="entry name" value="PRK15061.1"/>
    <property type="match status" value="1"/>
</dbReference>
<dbReference type="PANTHER" id="PTHR30555:SF0">
    <property type="entry name" value="CATALASE-PEROXIDASE"/>
    <property type="match status" value="1"/>
</dbReference>
<dbReference type="PANTHER" id="PTHR30555">
    <property type="entry name" value="HYDROPEROXIDASE I, BIFUNCTIONAL CATALASE-PEROXIDASE"/>
    <property type="match status" value="1"/>
</dbReference>
<dbReference type="Pfam" id="PF00141">
    <property type="entry name" value="peroxidase"/>
    <property type="match status" value="2"/>
</dbReference>
<dbReference type="PRINTS" id="PR00460">
    <property type="entry name" value="BPEROXIDASE"/>
</dbReference>
<dbReference type="PRINTS" id="PR00458">
    <property type="entry name" value="PEROXIDASE"/>
</dbReference>
<dbReference type="SUPFAM" id="SSF48113">
    <property type="entry name" value="Heme-dependent peroxidases"/>
    <property type="match status" value="2"/>
</dbReference>
<dbReference type="PROSITE" id="PS00435">
    <property type="entry name" value="PEROXIDASE_1"/>
    <property type="match status" value="1"/>
</dbReference>
<dbReference type="PROSITE" id="PS00436">
    <property type="entry name" value="PEROXIDASE_2"/>
    <property type="match status" value="1"/>
</dbReference>
<dbReference type="PROSITE" id="PS50873">
    <property type="entry name" value="PEROXIDASE_4"/>
    <property type="match status" value="1"/>
</dbReference>
<reference key="1">
    <citation type="submission" date="2006-05" db="EMBL/GenBank/DDBJ databases">
        <authorList>
            <consortium name="Genoscope"/>
        </authorList>
    </citation>
    <scope>NUCLEOTIDE SEQUENCE [LARGE SCALE GENOMIC DNA]</scope>
    <source>
        <strain>WH7803</strain>
    </source>
</reference>
<name>KATG_SYNPW</name>
<protein>
    <recommendedName>
        <fullName evidence="1">Catalase-peroxidase</fullName>
        <shortName evidence="1">CP</shortName>
        <ecNumber evidence="1">1.11.1.21</ecNumber>
    </recommendedName>
    <alternativeName>
        <fullName evidence="1">Peroxidase/catalase</fullName>
    </alternativeName>
</protein>
<organism>
    <name type="scientific">Synechococcus sp. (strain WH7803)</name>
    <dbReference type="NCBI Taxonomy" id="32051"/>
    <lineage>
        <taxon>Bacteria</taxon>
        <taxon>Bacillati</taxon>
        <taxon>Cyanobacteriota</taxon>
        <taxon>Cyanophyceae</taxon>
        <taxon>Synechococcales</taxon>
        <taxon>Synechococcaceae</taxon>
        <taxon>Synechococcus</taxon>
    </lineage>
</organism>
<comment type="function">
    <text evidence="1">Bifunctional enzyme with both catalase and broad-spectrum peroxidase activity.</text>
</comment>
<comment type="catalytic activity">
    <reaction evidence="1">
        <text>H2O2 + AH2 = A + 2 H2O</text>
        <dbReference type="Rhea" id="RHEA:30275"/>
        <dbReference type="ChEBI" id="CHEBI:13193"/>
        <dbReference type="ChEBI" id="CHEBI:15377"/>
        <dbReference type="ChEBI" id="CHEBI:16240"/>
        <dbReference type="ChEBI" id="CHEBI:17499"/>
        <dbReference type="EC" id="1.11.1.21"/>
    </reaction>
</comment>
<comment type="catalytic activity">
    <reaction evidence="1">
        <text>2 H2O2 = O2 + 2 H2O</text>
        <dbReference type="Rhea" id="RHEA:20309"/>
        <dbReference type="ChEBI" id="CHEBI:15377"/>
        <dbReference type="ChEBI" id="CHEBI:15379"/>
        <dbReference type="ChEBI" id="CHEBI:16240"/>
        <dbReference type="EC" id="1.11.1.21"/>
    </reaction>
</comment>
<comment type="cofactor">
    <cofactor evidence="1">
        <name>heme b</name>
        <dbReference type="ChEBI" id="CHEBI:60344"/>
    </cofactor>
    <text evidence="1">Binds 1 heme b (iron(II)-protoporphyrin IX) group per dimer.</text>
</comment>
<comment type="subunit">
    <text evidence="1">Homodimer or homotetramer.</text>
</comment>
<comment type="PTM">
    <text evidence="1">Formation of the three residue Trp-Tyr-Met cross-link is important for the catalase, but not the peroxidase activity of the enzyme.</text>
</comment>
<comment type="similarity">
    <text evidence="1">Belongs to the peroxidase family. Peroxidase/catalase subfamily.</text>
</comment>
<sequence>MSDLKCPFSGHTGAVTPAGNTNNGDWWPNQINLGILHQHHPASNPLGDAFDYPTAFASLDYSALKADLQTLMTDSQDWWPADWGHYGALFIRLAWHSAGTYRTGDGRGGAGHGNQRFAPLNSWPDNTNLDKARRLLWPIKRKYGNAISWADLIILSGNVALESMGFRTFGFAGGREDIWQPEEDVFWGKETGWLKDERRNDKGELNQPLAAVEMGLIYVNPEGPHGEPDPVASGRDVRETFARMGMTVEETVALVAGGHTFGKCHGAAPDSHLEAEPEGAALHEQGLGWRNTYESGKGEHTITSGIEGAWKPNPTRWDQGYFQMMFTYEWELTKSPAGAWQWTAKDVKPEHMIPDAHVAGKSSAPIMTTADLSLRHDAIMEPVARRFHLDQEAFADAFARAWFKLTHRDLGPRALYLGPDVPEEVQIWQDPVPPVTHPLIDEAEISTLKQQILASGQSVSALVAAAWGSASTFRGSDRRGGANGGRIRLLPQRTWEVNDPEQLNGVLTALETIQSQFNSSSSNGKSVSIADLIVLGGCAAVEKAAADGGHTVVVPFRPGRSDAGPEQTDTASFNVLKPLADGFRNWQRSGLPLRAEELLVDRAQLLTLSAPEMTVLLAGLRVMGANTAGNRQGVFTQNVGVLSNDFCVNLLDMTTRWTPTSEAQDAYIGRDSATGAERWSASRADLVFGSNSQLRAIVEVYAQNDGGSRFVADFVKAWVKVMELDRFDLRS</sequence>
<evidence type="ECO:0000255" key="1">
    <source>
        <dbReference type="HAMAP-Rule" id="MF_01961"/>
    </source>
</evidence>
<evidence type="ECO:0000256" key="2">
    <source>
        <dbReference type="SAM" id="MobiDB-lite"/>
    </source>
</evidence>
<proteinExistence type="inferred from homology"/>
<feature type="chain" id="PRO_0000354945" description="Catalase-peroxidase">
    <location>
        <begin position="1"/>
        <end position="731"/>
    </location>
</feature>
<feature type="region of interest" description="Disordered" evidence="2">
    <location>
        <begin position="1"/>
        <end position="23"/>
    </location>
</feature>
<feature type="active site" description="Proton acceptor" evidence="1">
    <location>
        <position position="96"/>
    </location>
</feature>
<feature type="binding site" description="axial binding residue" evidence="1">
    <location>
        <position position="259"/>
    </location>
    <ligand>
        <name>heme b</name>
        <dbReference type="ChEBI" id="CHEBI:60344"/>
    </ligand>
    <ligandPart>
        <name>Fe</name>
        <dbReference type="ChEBI" id="CHEBI:18248"/>
    </ligandPart>
</feature>
<feature type="site" description="Transition state stabilizer" evidence="1">
    <location>
        <position position="92"/>
    </location>
</feature>
<feature type="cross-link" description="Tryptophyl-tyrosyl-methioninium (Trp-Tyr) (with M-244)" evidence="1">
    <location>
        <begin position="95"/>
        <end position="218"/>
    </location>
</feature>
<feature type="cross-link" description="Tryptophyl-tyrosyl-methioninium (Tyr-Met) (with W-95)" evidence="1">
    <location>
        <begin position="218"/>
        <end position="244"/>
    </location>
</feature>
<accession>A5GJV3</accession>
<keyword id="KW-0349">Heme</keyword>
<keyword id="KW-0376">Hydrogen peroxide</keyword>
<keyword id="KW-0408">Iron</keyword>
<keyword id="KW-0479">Metal-binding</keyword>
<keyword id="KW-0560">Oxidoreductase</keyword>
<keyword id="KW-0575">Peroxidase</keyword>
<keyword id="KW-1185">Reference proteome</keyword>
<gene>
    <name evidence="1" type="primary">katG</name>
    <name type="ordered locus">SynWH7803_0792</name>
</gene>